<accession>P50971</accession>
<keyword id="KW-0963">Cytoplasm</keyword>
<keyword id="KW-0903">Direct protein sequencing</keyword>
<keyword id="KW-1015">Disulfide bond</keyword>
<keyword id="KW-0274">FAD</keyword>
<keyword id="KW-0285">Flavoprotein</keyword>
<keyword id="KW-0521">NADP</keyword>
<keyword id="KW-0560">Oxidoreductase</keyword>
<keyword id="KW-0676">Redox-active center</keyword>
<proteinExistence type="evidence at protein level"/>
<gene>
    <name type="primary">trxB</name>
</gene>
<feature type="chain" id="PRO_0000166731" description="Thioredoxin reductase">
    <location>
        <begin position="1"/>
        <end position="315"/>
    </location>
</feature>
<feature type="binding site" evidence="2">
    <location>
        <begin position="34"/>
        <end position="41"/>
    </location>
    <ligand>
        <name>FAD</name>
        <dbReference type="ChEBI" id="CHEBI:57692"/>
    </ligand>
</feature>
<feature type="binding site" evidence="2">
    <location>
        <begin position="282"/>
        <end position="291"/>
    </location>
    <ligand>
        <name>FAD</name>
        <dbReference type="ChEBI" id="CHEBI:57692"/>
    </ligand>
</feature>
<feature type="disulfide bond" description="Redox-active" evidence="2">
    <location>
        <begin position="134"/>
        <end position="137"/>
    </location>
</feature>
<sequence>MENVYDLAIIGSGPAGLAAALYGARAKMKTIMIEGQKVGGQIVITHEVANYPGSVREATGPSLIERMEEQANEFGAEKVMDKIVDVDLDGKIKVIKGEKAEYKAKSVILATGAAPRLAGCPGEQELTGKGVSYCATCDADFFEDMEVFVVGGGDTAVEEAMYLAKFARKVTIVHRRDELRAAKSIQEKAFKNPKLDFMWNSAIEEIKGDGIVESAVFKNLVTGETTEYFANEEDGTFGIFVFIGYIPKSDVFKGKITLDDAGYIITDDNMKTNVEGVFAAGDIRVKSLRQVVTACADGAIAATQAEKYVEANFEE</sequence>
<protein>
    <recommendedName>
        <fullName>Thioredoxin reductase</fullName>
        <shortName>TRXR</shortName>
        <ecNumber>1.8.1.9</ecNumber>
    </recommendedName>
</protein>
<name>TRXB_PEPAC</name>
<reference key="1">
    <citation type="journal article" date="1993" name="Eur. J. Biochem.">
        <title>Components of glycine reductase from Eubacterium acidaminophilum. Cloning, sequencing and identification of the genes for thioredoxin reductase, thioredoxin and selenoprotein PA.</title>
        <authorList>
            <person name="Luebbers M."/>
            <person name="Andreesen J.R."/>
        </authorList>
    </citation>
    <scope>NUCLEOTIDE SEQUENCE [GENOMIC DNA]</scope>
    <source>
        <strain>ATCC 49065 / DSM 3953 / al-2</strain>
    </source>
</reference>
<reference key="2">
    <citation type="submission" date="1996-05" db="EMBL/GenBank/DDBJ databases">
        <authorList>
            <person name="Andreesen J.R."/>
        </authorList>
    </citation>
    <scope>SEQUENCE REVISION TO 275</scope>
</reference>
<reference key="3">
    <citation type="journal article" date="1989" name="J. Bacteriol.">
        <title>Isolation of an atypically small lipoamide dehydrogenase involved in the glycine decarboxylase complex from Eubacterium acidaminophilum.</title>
        <authorList>
            <person name="Freundenberg W."/>
            <person name="Dietrichs D."/>
            <person name="Lebertz H."/>
            <person name="Andreesen J.R."/>
        </authorList>
    </citation>
    <scope>PROTEIN SEQUENCE OF 1-54</scope>
</reference>
<organism>
    <name type="scientific">Peptoclostridium acidaminophilum</name>
    <name type="common">Eubacterium acidaminophilum</name>
    <dbReference type="NCBI Taxonomy" id="1731"/>
    <lineage>
        <taxon>Bacteria</taxon>
        <taxon>Bacillati</taxon>
        <taxon>Bacillota</taxon>
        <taxon>Clostridia</taxon>
        <taxon>Peptostreptococcales</taxon>
        <taxon>Peptoclostridiaceae</taxon>
        <taxon>Peptoclostridium</taxon>
    </lineage>
</organism>
<comment type="catalytic activity">
    <reaction>
        <text>[thioredoxin]-dithiol + NADP(+) = [thioredoxin]-disulfide + NADPH + H(+)</text>
        <dbReference type="Rhea" id="RHEA:20345"/>
        <dbReference type="Rhea" id="RHEA-COMP:10698"/>
        <dbReference type="Rhea" id="RHEA-COMP:10700"/>
        <dbReference type="ChEBI" id="CHEBI:15378"/>
        <dbReference type="ChEBI" id="CHEBI:29950"/>
        <dbReference type="ChEBI" id="CHEBI:50058"/>
        <dbReference type="ChEBI" id="CHEBI:57783"/>
        <dbReference type="ChEBI" id="CHEBI:58349"/>
        <dbReference type="EC" id="1.8.1.9"/>
    </reaction>
</comment>
<comment type="cofactor">
    <cofactor evidence="2">
        <name>FAD</name>
        <dbReference type="ChEBI" id="CHEBI:57692"/>
    </cofactor>
    <text evidence="2">Binds 1 FAD per subunit.</text>
</comment>
<comment type="subunit">
    <text evidence="2">Homodimer.</text>
</comment>
<comment type="subcellular location">
    <subcellularLocation>
        <location evidence="1">Cytoplasm</location>
    </subcellularLocation>
</comment>
<comment type="miscellaneous">
    <text>The active site is a redox-active disulfide bond.</text>
</comment>
<comment type="similarity">
    <text evidence="3">Belongs to the class-II pyridine nucleotide-disulfide oxidoreductase family.</text>
</comment>
<evidence type="ECO:0000250" key="1"/>
<evidence type="ECO:0000250" key="2">
    <source>
        <dbReference type="UniProtKB" id="P0A9P4"/>
    </source>
</evidence>
<evidence type="ECO:0000305" key="3"/>
<dbReference type="EC" id="1.8.1.9"/>
<dbReference type="EMBL" id="L04500">
    <property type="protein sequence ID" value="AAB93303.1"/>
    <property type="molecule type" value="Genomic_DNA"/>
</dbReference>
<dbReference type="PIR" id="S38988">
    <property type="entry name" value="D35156"/>
</dbReference>
<dbReference type="SMR" id="P50971"/>
<dbReference type="GO" id="GO:0005737">
    <property type="term" value="C:cytoplasm"/>
    <property type="evidence" value="ECO:0007669"/>
    <property type="project" value="UniProtKB-SubCell"/>
</dbReference>
<dbReference type="GO" id="GO:0004791">
    <property type="term" value="F:thioredoxin-disulfide reductase (NADPH) activity"/>
    <property type="evidence" value="ECO:0007669"/>
    <property type="project" value="UniProtKB-EC"/>
</dbReference>
<dbReference type="GO" id="GO:0019430">
    <property type="term" value="P:removal of superoxide radicals"/>
    <property type="evidence" value="ECO:0007669"/>
    <property type="project" value="InterPro"/>
</dbReference>
<dbReference type="Gene3D" id="3.50.50.60">
    <property type="entry name" value="FAD/NAD(P)-binding domain"/>
    <property type="match status" value="2"/>
</dbReference>
<dbReference type="InterPro" id="IPR036188">
    <property type="entry name" value="FAD/NAD-bd_sf"/>
</dbReference>
<dbReference type="InterPro" id="IPR023753">
    <property type="entry name" value="FAD/NAD-binding_dom"/>
</dbReference>
<dbReference type="InterPro" id="IPR050097">
    <property type="entry name" value="Ferredoxin-NADP_redctase_2"/>
</dbReference>
<dbReference type="InterPro" id="IPR008255">
    <property type="entry name" value="Pyr_nucl-diS_OxRdtase_2_AS"/>
</dbReference>
<dbReference type="InterPro" id="IPR005982">
    <property type="entry name" value="Thioredox_Rdtase"/>
</dbReference>
<dbReference type="NCBIfam" id="TIGR01292">
    <property type="entry name" value="TRX_reduct"/>
    <property type="match status" value="1"/>
</dbReference>
<dbReference type="PANTHER" id="PTHR48105">
    <property type="entry name" value="THIOREDOXIN REDUCTASE 1-RELATED-RELATED"/>
    <property type="match status" value="1"/>
</dbReference>
<dbReference type="Pfam" id="PF07992">
    <property type="entry name" value="Pyr_redox_2"/>
    <property type="match status" value="1"/>
</dbReference>
<dbReference type="PRINTS" id="PR00368">
    <property type="entry name" value="FADPNR"/>
</dbReference>
<dbReference type="PRINTS" id="PR00469">
    <property type="entry name" value="PNDRDTASEII"/>
</dbReference>
<dbReference type="SUPFAM" id="SSF51905">
    <property type="entry name" value="FAD/NAD(P)-binding domain"/>
    <property type="match status" value="1"/>
</dbReference>
<dbReference type="PROSITE" id="PS00573">
    <property type="entry name" value="PYRIDINE_REDOX_2"/>
    <property type="match status" value="1"/>
</dbReference>